<reference key="1">
    <citation type="submission" date="2004-11" db="EMBL/GenBank/DDBJ databases">
        <authorList>
            <consortium name="The German cDNA consortium"/>
        </authorList>
    </citation>
    <scope>NUCLEOTIDE SEQUENCE [LARGE SCALE MRNA]</scope>
    <source>
        <tissue>Heart</tissue>
    </source>
</reference>
<organism>
    <name type="scientific">Pongo abelii</name>
    <name type="common">Sumatran orangutan</name>
    <name type="synonym">Pongo pygmaeus abelii</name>
    <dbReference type="NCBI Taxonomy" id="9601"/>
    <lineage>
        <taxon>Eukaryota</taxon>
        <taxon>Metazoa</taxon>
        <taxon>Chordata</taxon>
        <taxon>Craniata</taxon>
        <taxon>Vertebrata</taxon>
        <taxon>Euteleostomi</taxon>
        <taxon>Mammalia</taxon>
        <taxon>Eutheria</taxon>
        <taxon>Euarchontoglires</taxon>
        <taxon>Primates</taxon>
        <taxon>Haplorrhini</taxon>
        <taxon>Catarrhini</taxon>
        <taxon>Hominidae</taxon>
        <taxon>Pongo</taxon>
    </lineage>
</organism>
<sequence length="214" mass="24592">MGRRPARCYRYCKNKPYPKSRFCRGVPDAKIRIFDLGRKKAKVDEFPLCGHMVSDEYEQLSSEALEAARICANKYMVKSCGKDGFHIRVRLHPFHVIRINKMLSCAGADRLQTGMRGAFGKPQGTVARVHIGQVIMSIRTKLQNKEHVIEALRRAKFKFPGRQKIHISKKWGFTKFNADEFEDMVAEKRLIPDGCGVKYTPNRGPLDKWRALHS</sequence>
<evidence type="ECO:0000250" key="1">
    <source>
        <dbReference type="UniProtKB" id="P27635"/>
    </source>
</evidence>
<evidence type="ECO:0000250" key="2">
    <source>
        <dbReference type="UniProtKB" id="Q6ZWV3"/>
    </source>
</evidence>
<evidence type="ECO:0000305" key="3"/>
<comment type="function">
    <text evidence="1">Component of the large ribosomal subunit. Plays a role in the formation of actively translating ribosomes. May play a role in the embryonic brain development.</text>
</comment>
<comment type="subunit">
    <text evidence="1">Component of the large ribosomal subunit. Mature ribosomes consist of a small (40S) and a large (60S) subunit. The 40S subunit contains about 33 different proteins and 1 molecule of RNA (18S). The 60S subunit contains about 49 different proteins and 3 molecules of RNA (28S, 5.8S and 5S).</text>
</comment>
<comment type="subcellular location">
    <subcellularLocation>
        <location evidence="2">Cytoplasm</location>
    </subcellularLocation>
</comment>
<comment type="PTM">
    <text evidence="2">Citrullinated by PADI4.</text>
</comment>
<comment type="PTM">
    <text evidence="2">Ufmylated by UFL1.</text>
</comment>
<comment type="similarity">
    <text evidence="3">Belongs to the universal ribosomal protein uL16 family.</text>
</comment>
<feature type="chain" id="PRO_0000147109" description="Large ribosomal subunit protein uL16">
    <location>
        <begin position="1"/>
        <end position="214"/>
    </location>
</feature>
<feature type="modified residue" description="Citrulline" evidence="2">
    <location>
        <position position="32"/>
    </location>
</feature>
<feature type="cross-link" description="Glycyl lysine isopeptide (Lys-Gly) (interchain with G-Cter in SUMO2)" evidence="1">
    <location>
        <position position="175"/>
    </location>
</feature>
<feature type="cross-link" description="Glycyl lysine isopeptide (Lys-Gly) (interchain with G-Cter in ubiquitin)" evidence="1">
    <location>
        <position position="188"/>
    </location>
</feature>
<gene>
    <name evidence="1" type="primary">RPL10</name>
</gene>
<protein>
    <recommendedName>
        <fullName evidence="3">Large ribosomal subunit protein uL16</fullName>
    </recommendedName>
    <alternativeName>
        <fullName evidence="3">60S ribosomal protein L10</fullName>
    </alternativeName>
    <alternativeName>
        <fullName evidence="1">Ribosomal protein L10</fullName>
    </alternativeName>
</protein>
<keyword id="KW-0164">Citrullination</keyword>
<keyword id="KW-0963">Cytoplasm</keyword>
<keyword id="KW-0217">Developmental protein</keyword>
<keyword id="KW-1017">Isopeptide bond</keyword>
<keyword id="KW-1185">Reference proteome</keyword>
<keyword id="KW-0687">Ribonucleoprotein</keyword>
<keyword id="KW-0689">Ribosomal protein</keyword>
<keyword id="KW-0832">Ubl conjugation</keyword>
<name>RL10_PONAB</name>
<proteinExistence type="evidence at transcript level"/>
<dbReference type="EMBL" id="CR859565">
    <property type="protein sequence ID" value="CAH91729.1"/>
    <property type="molecule type" value="mRNA"/>
</dbReference>
<dbReference type="RefSeq" id="NP_001126004.1">
    <property type="nucleotide sequence ID" value="NM_001132532.1"/>
</dbReference>
<dbReference type="SMR" id="Q5R931"/>
<dbReference type="STRING" id="9601.ENSPPYP00000023363"/>
<dbReference type="GeneID" id="100172946"/>
<dbReference type="KEGG" id="pon:100172946"/>
<dbReference type="CTD" id="6134"/>
<dbReference type="eggNOG" id="KOG0857">
    <property type="taxonomic scope" value="Eukaryota"/>
</dbReference>
<dbReference type="InParanoid" id="Q5R931"/>
<dbReference type="OrthoDB" id="9835198at2759"/>
<dbReference type="Proteomes" id="UP000001595">
    <property type="component" value="Unplaced"/>
</dbReference>
<dbReference type="GO" id="GO:0022625">
    <property type="term" value="C:cytosolic large ribosomal subunit"/>
    <property type="evidence" value="ECO:0000250"/>
    <property type="project" value="UniProtKB"/>
</dbReference>
<dbReference type="GO" id="GO:0003735">
    <property type="term" value="F:structural constituent of ribosome"/>
    <property type="evidence" value="ECO:0000250"/>
    <property type="project" value="UniProtKB"/>
</dbReference>
<dbReference type="GO" id="GO:0045182">
    <property type="term" value="F:translation regulator activity"/>
    <property type="evidence" value="ECO:0000250"/>
    <property type="project" value="UniProtKB"/>
</dbReference>
<dbReference type="GO" id="GO:1990403">
    <property type="term" value="P:embryonic brain development"/>
    <property type="evidence" value="ECO:0000250"/>
    <property type="project" value="UniProtKB"/>
</dbReference>
<dbReference type="GO" id="GO:0006417">
    <property type="term" value="P:regulation of translation"/>
    <property type="evidence" value="ECO:0000250"/>
    <property type="project" value="UniProtKB"/>
</dbReference>
<dbReference type="GO" id="GO:0006412">
    <property type="term" value="P:translation"/>
    <property type="evidence" value="ECO:0007669"/>
    <property type="project" value="InterPro"/>
</dbReference>
<dbReference type="CDD" id="cd01433">
    <property type="entry name" value="Ribosomal_L16_L10e"/>
    <property type="match status" value="1"/>
</dbReference>
<dbReference type="FunFam" id="3.30.60.300:FF:000001">
    <property type="entry name" value="60S ribosomal protein L10"/>
    <property type="match status" value="1"/>
</dbReference>
<dbReference type="FunFam" id="3.90.1170.10:FF:000002">
    <property type="entry name" value="60S ribosomal protein L10"/>
    <property type="match status" value="1"/>
</dbReference>
<dbReference type="Gene3D" id="3.30.60.300">
    <property type="match status" value="1"/>
</dbReference>
<dbReference type="Gene3D" id="3.90.1170.10">
    <property type="entry name" value="Ribosomal protein L10e/L16"/>
    <property type="match status" value="1"/>
</dbReference>
<dbReference type="InterPro" id="IPR047873">
    <property type="entry name" value="Ribosomal_uL16"/>
</dbReference>
<dbReference type="InterPro" id="IPR018255">
    <property type="entry name" value="Ribosomal_uL16_CS_euk_arc"/>
</dbReference>
<dbReference type="InterPro" id="IPR016180">
    <property type="entry name" value="Ribosomal_uL16_dom"/>
</dbReference>
<dbReference type="InterPro" id="IPR001197">
    <property type="entry name" value="Ribosomal_uL16_euk_arch"/>
</dbReference>
<dbReference type="InterPro" id="IPR036920">
    <property type="entry name" value="Ribosomal_uL16_sf"/>
</dbReference>
<dbReference type="NCBIfam" id="NF003239">
    <property type="entry name" value="PRK04199.1-4"/>
    <property type="match status" value="1"/>
</dbReference>
<dbReference type="NCBIfam" id="TIGR00279">
    <property type="entry name" value="uL16_euk_arch"/>
    <property type="match status" value="1"/>
</dbReference>
<dbReference type="PANTHER" id="PTHR11726">
    <property type="entry name" value="60S RIBOSOMAL PROTEIN L10"/>
    <property type="match status" value="1"/>
</dbReference>
<dbReference type="Pfam" id="PF00252">
    <property type="entry name" value="Ribosomal_L16"/>
    <property type="match status" value="1"/>
</dbReference>
<dbReference type="PIRSF" id="PIRSF005590">
    <property type="entry name" value="Ribosomal_L10"/>
    <property type="match status" value="1"/>
</dbReference>
<dbReference type="SUPFAM" id="SSF54686">
    <property type="entry name" value="Ribosomal protein L16p/L10e"/>
    <property type="match status" value="1"/>
</dbReference>
<dbReference type="PROSITE" id="PS01257">
    <property type="entry name" value="RIBOSOMAL_L10E"/>
    <property type="match status" value="1"/>
</dbReference>
<accession>Q5R931</accession>